<sequence>MREIINIHIGQAGIQAGEQVWSLMCAEHGINQDGTRNSTSANGNSDCSVLFSEGSRGKYVPRNLMVDLEPSVVDSVRNSSYKELYHPAQMITGREDAANNFARGHYTVGKDMLDVTVDRLRKIADNCTSLQGFQIFHSVGGGTGSGFASLLVERLSVEFPKKCKLSYTVYPSPQLATSVVEPYNSVLSTHSLLEHNDISVVLDNQAIYDICKQRLKIERANYRNLNHVISQTVSAITCSLRFSGSLNVDMNEYQTNLVPYPRIHFMLSSLAPMISRQENYYHENNVAELTSSVFEADNMMAKCNPRDGKYIASCLMYRGDVVNKEVTDAVKNVKSKANIQFVDWSPCAFKIGVNSQKPTVLPDSEFAQVERSCAMISNNTAISQVFERMNDKFDLLYAKRAYVHHFVSEGMEEGEFAEAREDLAALEKDYTELASNSVNEEDSMLDEGETLN</sequence>
<accession>Q962P8</accession>
<evidence type="ECO:0000250" key="1">
    <source>
        <dbReference type="UniProtKB" id="P68363"/>
    </source>
</evidence>
<evidence type="ECO:0000305" key="2"/>
<reference key="1">
    <citation type="journal article" date="2002" name="Gene">
        <title>Cloning and characterization of a divergent alpha-tubulin that is expressed specifically in dividing amebae of Naegleria gruberi.</title>
        <authorList>
            <person name="Chung S."/>
            <person name="Cho J.-Y."/>
            <person name="Cheon H.-J."/>
            <person name="Paik S.-Y."/>
            <person name="Lee J.-H."/>
        </authorList>
    </citation>
    <scope>NUCLEOTIDE SEQUENCE [GENOMIC DNA]</scope>
    <source>
        <strain>ATCC 30961 / NB-1</strain>
    </source>
</reference>
<comment type="function">
    <text>Tubulin is the major constituent of microtubules, a cylinder consisting of laterally associated linear protofilaments composed of alpha- and beta-tubulin heterodimers. Microtubules grow by the addition of GTP-tubulin dimers to the microtubule end, where a stabilizing cap forms. Below the cap, tubulin dimers are in GDP-bound state, owing to GTPase activity of alpha-tubulin.</text>
</comment>
<comment type="catalytic activity">
    <reaction evidence="1">
        <text>GTP + H2O = GDP + phosphate + H(+)</text>
        <dbReference type="Rhea" id="RHEA:19669"/>
        <dbReference type="ChEBI" id="CHEBI:15377"/>
        <dbReference type="ChEBI" id="CHEBI:15378"/>
        <dbReference type="ChEBI" id="CHEBI:37565"/>
        <dbReference type="ChEBI" id="CHEBI:43474"/>
        <dbReference type="ChEBI" id="CHEBI:58189"/>
    </reaction>
    <physiologicalReaction direction="left-to-right" evidence="1">
        <dbReference type="Rhea" id="RHEA:19670"/>
    </physiologicalReaction>
</comment>
<comment type="cofactor">
    <cofactor evidence="1">
        <name>Mg(2+)</name>
        <dbReference type="ChEBI" id="CHEBI:18420"/>
    </cofactor>
</comment>
<comment type="subunit">
    <text>Dimer of alpha and beta chains. A typical microtubule is a hollow water-filled tube with an outer diameter of 25 nm and an inner diameter of 15 nM. Alpha-beta heterodimers associate head-to-tail to form protofilaments running lengthwise along the microtubule wall with the beta-tubulin subunit facing the microtubule plus end conferring a structural polarity. Microtubules usually have 13 protofilaments but different protofilament numbers can be found in some organisms and specialized cells.</text>
</comment>
<comment type="subcellular location">
    <subcellularLocation>
        <location>Cytoplasm</location>
        <location>Cytoskeleton</location>
        <location>Spindle</location>
    </subcellularLocation>
    <text>Present in the nuclei and mitotic spindle-fibers but absent in flagellar axonemes or cytoskeletal microtubules.</text>
</comment>
<comment type="developmental stage">
    <text>Expressed in actively growing cells and repressed quickly when these cells were induced to differentiate.</text>
</comment>
<comment type="similarity">
    <text evidence="2">Belongs to the tubulin family.</text>
</comment>
<keyword id="KW-0963">Cytoplasm</keyword>
<keyword id="KW-0206">Cytoskeleton</keyword>
<keyword id="KW-0342">GTP-binding</keyword>
<keyword id="KW-0378">Hydrolase</keyword>
<keyword id="KW-0460">Magnesium</keyword>
<keyword id="KW-0479">Metal-binding</keyword>
<keyword id="KW-0493">Microtubule</keyword>
<keyword id="KW-0547">Nucleotide-binding</keyword>
<feature type="chain" id="PRO_0000048196" description="Tubulin alpha-6 chain">
    <location>
        <begin position="1"/>
        <end position="452"/>
    </location>
</feature>
<feature type="active site" evidence="1">
    <location>
        <position position="252"/>
    </location>
</feature>
<feature type="binding site" evidence="1">
    <location>
        <position position="11"/>
    </location>
    <ligand>
        <name>GTP</name>
        <dbReference type="ChEBI" id="CHEBI:37565"/>
    </ligand>
</feature>
<feature type="binding site" evidence="1">
    <location>
        <position position="69"/>
    </location>
    <ligand>
        <name>GTP</name>
        <dbReference type="ChEBI" id="CHEBI:37565"/>
    </ligand>
</feature>
<feature type="binding site" evidence="1">
    <location>
        <position position="69"/>
    </location>
    <ligand>
        <name>Mg(2+)</name>
        <dbReference type="ChEBI" id="CHEBI:18420"/>
    </ligand>
</feature>
<feature type="binding site" evidence="1">
    <location>
        <position position="138"/>
    </location>
    <ligand>
        <name>GTP</name>
        <dbReference type="ChEBI" id="CHEBI:37565"/>
    </ligand>
</feature>
<feature type="binding site" evidence="1">
    <location>
        <position position="142"/>
    </location>
    <ligand>
        <name>GTP</name>
        <dbReference type="ChEBI" id="CHEBI:37565"/>
    </ligand>
</feature>
<feature type="binding site" evidence="1">
    <location>
        <position position="143"/>
    </location>
    <ligand>
        <name>GTP</name>
        <dbReference type="ChEBI" id="CHEBI:37565"/>
    </ligand>
</feature>
<feature type="binding site" evidence="1">
    <location>
        <position position="177"/>
    </location>
    <ligand>
        <name>GTP</name>
        <dbReference type="ChEBI" id="CHEBI:37565"/>
    </ligand>
</feature>
<feature type="binding site" evidence="1">
    <location>
        <position position="204"/>
    </location>
    <ligand>
        <name>GTP</name>
        <dbReference type="ChEBI" id="CHEBI:37565"/>
    </ligand>
</feature>
<feature type="binding site" evidence="1">
    <location>
        <position position="226"/>
    </location>
    <ligand>
        <name>GTP</name>
        <dbReference type="ChEBI" id="CHEBI:37565"/>
    </ligand>
</feature>
<protein>
    <recommendedName>
        <fullName>Tubulin alpha-6 chain</fullName>
        <ecNumber evidence="1">3.6.5.-</ecNumber>
    </recommendedName>
</protein>
<dbReference type="EC" id="3.6.5.-" evidence="1"/>
<dbReference type="EMBL" id="AF401640">
    <property type="protein sequence ID" value="AAK84065.1"/>
    <property type="molecule type" value="Genomic_DNA"/>
</dbReference>
<dbReference type="SMR" id="Q962P8"/>
<dbReference type="GO" id="GO:0005737">
    <property type="term" value="C:cytoplasm"/>
    <property type="evidence" value="ECO:0007669"/>
    <property type="project" value="UniProtKB-KW"/>
</dbReference>
<dbReference type="GO" id="GO:0005874">
    <property type="term" value="C:microtubule"/>
    <property type="evidence" value="ECO:0007669"/>
    <property type="project" value="UniProtKB-KW"/>
</dbReference>
<dbReference type="GO" id="GO:0005819">
    <property type="term" value="C:spindle"/>
    <property type="evidence" value="ECO:0007669"/>
    <property type="project" value="UniProtKB-SubCell"/>
</dbReference>
<dbReference type="GO" id="GO:0005525">
    <property type="term" value="F:GTP binding"/>
    <property type="evidence" value="ECO:0007669"/>
    <property type="project" value="UniProtKB-KW"/>
</dbReference>
<dbReference type="GO" id="GO:0016787">
    <property type="term" value="F:hydrolase activity"/>
    <property type="evidence" value="ECO:0007669"/>
    <property type="project" value="UniProtKB-KW"/>
</dbReference>
<dbReference type="GO" id="GO:0046872">
    <property type="term" value="F:metal ion binding"/>
    <property type="evidence" value="ECO:0007669"/>
    <property type="project" value="UniProtKB-KW"/>
</dbReference>
<dbReference type="GO" id="GO:0005200">
    <property type="term" value="F:structural constituent of cytoskeleton"/>
    <property type="evidence" value="ECO:0007669"/>
    <property type="project" value="InterPro"/>
</dbReference>
<dbReference type="GO" id="GO:0007017">
    <property type="term" value="P:microtubule-based process"/>
    <property type="evidence" value="ECO:0007669"/>
    <property type="project" value="InterPro"/>
</dbReference>
<dbReference type="CDD" id="cd02186">
    <property type="entry name" value="alpha_tubulin"/>
    <property type="match status" value="1"/>
</dbReference>
<dbReference type="FunFam" id="3.40.50.1440:FF:000011">
    <property type="entry name" value="Tubulin alpha chain"/>
    <property type="match status" value="1"/>
</dbReference>
<dbReference type="Gene3D" id="1.10.287.600">
    <property type="entry name" value="Helix hairpin bin"/>
    <property type="match status" value="1"/>
</dbReference>
<dbReference type="Gene3D" id="3.30.1330.20">
    <property type="entry name" value="Tubulin/FtsZ, C-terminal domain"/>
    <property type="match status" value="1"/>
</dbReference>
<dbReference type="Gene3D" id="3.40.50.1440">
    <property type="entry name" value="Tubulin/FtsZ, GTPase domain"/>
    <property type="match status" value="1"/>
</dbReference>
<dbReference type="InterPro" id="IPR002452">
    <property type="entry name" value="Alpha_tubulin"/>
</dbReference>
<dbReference type="InterPro" id="IPR013838">
    <property type="entry name" value="Beta-tubulin_BS"/>
</dbReference>
<dbReference type="InterPro" id="IPR008280">
    <property type="entry name" value="Tub_FtsZ_C"/>
</dbReference>
<dbReference type="InterPro" id="IPR000217">
    <property type="entry name" value="Tubulin"/>
</dbReference>
<dbReference type="InterPro" id="IPR037103">
    <property type="entry name" value="Tubulin/FtsZ-like_C"/>
</dbReference>
<dbReference type="InterPro" id="IPR018316">
    <property type="entry name" value="Tubulin/FtsZ_2-layer-sand-dom"/>
</dbReference>
<dbReference type="InterPro" id="IPR036525">
    <property type="entry name" value="Tubulin/FtsZ_GTPase_sf"/>
</dbReference>
<dbReference type="InterPro" id="IPR023123">
    <property type="entry name" value="Tubulin_C"/>
</dbReference>
<dbReference type="InterPro" id="IPR017975">
    <property type="entry name" value="Tubulin_CS"/>
</dbReference>
<dbReference type="InterPro" id="IPR003008">
    <property type="entry name" value="Tubulin_FtsZ_GTPase"/>
</dbReference>
<dbReference type="PANTHER" id="PTHR11588">
    <property type="entry name" value="TUBULIN"/>
    <property type="match status" value="1"/>
</dbReference>
<dbReference type="Pfam" id="PF00091">
    <property type="entry name" value="Tubulin"/>
    <property type="match status" value="1"/>
</dbReference>
<dbReference type="Pfam" id="PF03953">
    <property type="entry name" value="Tubulin_C"/>
    <property type="match status" value="1"/>
</dbReference>
<dbReference type="PRINTS" id="PR01162">
    <property type="entry name" value="ALPHATUBULIN"/>
</dbReference>
<dbReference type="PRINTS" id="PR01161">
    <property type="entry name" value="TUBULIN"/>
</dbReference>
<dbReference type="SMART" id="SM00864">
    <property type="entry name" value="Tubulin"/>
    <property type="match status" value="1"/>
</dbReference>
<dbReference type="SMART" id="SM00865">
    <property type="entry name" value="Tubulin_C"/>
    <property type="match status" value="1"/>
</dbReference>
<dbReference type="SUPFAM" id="SSF55307">
    <property type="entry name" value="Tubulin C-terminal domain-like"/>
    <property type="match status" value="1"/>
</dbReference>
<dbReference type="SUPFAM" id="SSF52490">
    <property type="entry name" value="Tubulin nucleotide-binding domain-like"/>
    <property type="match status" value="1"/>
</dbReference>
<dbReference type="PROSITE" id="PS00227">
    <property type="entry name" value="TUBULIN"/>
    <property type="match status" value="1"/>
</dbReference>
<proteinExistence type="evidence at transcript level"/>
<gene>
    <name type="primary">TUBA6</name>
</gene>
<name>TBA6_NAEPR</name>
<organism>
    <name type="scientific">Naegleria pringsheimi</name>
    <name type="common">Amoeba</name>
    <dbReference type="NCBI Taxonomy" id="234921"/>
    <lineage>
        <taxon>Eukaryota</taxon>
        <taxon>Discoba</taxon>
        <taxon>Heterolobosea</taxon>
        <taxon>Tetramitia</taxon>
        <taxon>Eutetramitia</taxon>
        <taxon>Vahlkampfiidae</taxon>
        <taxon>Naegleria</taxon>
    </lineage>
</organism>